<gene>
    <name evidence="1" type="primary">rplD</name>
    <name type="ordered locus">ACP_1450</name>
</gene>
<proteinExistence type="inferred from homology"/>
<dbReference type="EMBL" id="CP001472">
    <property type="protein sequence ID" value="ACO31678.1"/>
    <property type="molecule type" value="Genomic_DNA"/>
</dbReference>
<dbReference type="RefSeq" id="WP_015896583.1">
    <property type="nucleotide sequence ID" value="NC_012483.1"/>
</dbReference>
<dbReference type="SMR" id="C1F641"/>
<dbReference type="FunCoup" id="C1F641">
    <property type="interactions" value="651"/>
</dbReference>
<dbReference type="STRING" id="240015.ACP_1450"/>
<dbReference type="KEGG" id="aca:ACP_1450"/>
<dbReference type="eggNOG" id="COG0088">
    <property type="taxonomic scope" value="Bacteria"/>
</dbReference>
<dbReference type="HOGENOM" id="CLU_041575_5_2_0"/>
<dbReference type="InParanoid" id="C1F641"/>
<dbReference type="OrthoDB" id="9803201at2"/>
<dbReference type="Proteomes" id="UP000002207">
    <property type="component" value="Chromosome"/>
</dbReference>
<dbReference type="GO" id="GO:1990904">
    <property type="term" value="C:ribonucleoprotein complex"/>
    <property type="evidence" value="ECO:0007669"/>
    <property type="project" value="UniProtKB-KW"/>
</dbReference>
<dbReference type="GO" id="GO:0005840">
    <property type="term" value="C:ribosome"/>
    <property type="evidence" value="ECO:0007669"/>
    <property type="project" value="UniProtKB-KW"/>
</dbReference>
<dbReference type="GO" id="GO:0019843">
    <property type="term" value="F:rRNA binding"/>
    <property type="evidence" value="ECO:0007669"/>
    <property type="project" value="UniProtKB-UniRule"/>
</dbReference>
<dbReference type="GO" id="GO:0003735">
    <property type="term" value="F:structural constituent of ribosome"/>
    <property type="evidence" value="ECO:0007669"/>
    <property type="project" value="InterPro"/>
</dbReference>
<dbReference type="GO" id="GO:0006412">
    <property type="term" value="P:translation"/>
    <property type="evidence" value="ECO:0007669"/>
    <property type="project" value="UniProtKB-UniRule"/>
</dbReference>
<dbReference type="Gene3D" id="3.40.1370.10">
    <property type="match status" value="1"/>
</dbReference>
<dbReference type="HAMAP" id="MF_01328_B">
    <property type="entry name" value="Ribosomal_uL4_B"/>
    <property type="match status" value="1"/>
</dbReference>
<dbReference type="InterPro" id="IPR002136">
    <property type="entry name" value="Ribosomal_uL4"/>
</dbReference>
<dbReference type="InterPro" id="IPR013005">
    <property type="entry name" value="Ribosomal_uL4-like"/>
</dbReference>
<dbReference type="InterPro" id="IPR023574">
    <property type="entry name" value="Ribosomal_uL4_dom_sf"/>
</dbReference>
<dbReference type="NCBIfam" id="TIGR03953">
    <property type="entry name" value="rplD_bact"/>
    <property type="match status" value="1"/>
</dbReference>
<dbReference type="PANTHER" id="PTHR10746">
    <property type="entry name" value="50S RIBOSOMAL PROTEIN L4"/>
    <property type="match status" value="1"/>
</dbReference>
<dbReference type="PANTHER" id="PTHR10746:SF6">
    <property type="entry name" value="LARGE RIBOSOMAL SUBUNIT PROTEIN UL4M"/>
    <property type="match status" value="1"/>
</dbReference>
<dbReference type="Pfam" id="PF00573">
    <property type="entry name" value="Ribosomal_L4"/>
    <property type="match status" value="1"/>
</dbReference>
<dbReference type="SUPFAM" id="SSF52166">
    <property type="entry name" value="Ribosomal protein L4"/>
    <property type="match status" value="1"/>
</dbReference>
<evidence type="ECO:0000255" key="1">
    <source>
        <dbReference type="HAMAP-Rule" id="MF_01328"/>
    </source>
</evidence>
<evidence type="ECO:0000305" key="2"/>
<accession>C1F641</accession>
<comment type="function">
    <text evidence="1">One of the primary rRNA binding proteins, this protein initially binds near the 5'-end of the 23S rRNA. It is important during the early stages of 50S assembly. It makes multiple contacts with different domains of the 23S rRNA in the assembled 50S subunit and ribosome.</text>
</comment>
<comment type="function">
    <text evidence="1">Forms part of the polypeptide exit tunnel.</text>
</comment>
<comment type="subunit">
    <text evidence="1">Part of the 50S ribosomal subunit.</text>
</comment>
<comment type="similarity">
    <text evidence="1">Belongs to the universal ribosomal protein uL4 family.</text>
</comment>
<organism>
    <name type="scientific">Acidobacterium capsulatum (strain ATCC 51196 / DSM 11244 / BCRC 80197 / JCM 7670 / NBRC 15755 / NCIMB 13165 / 161)</name>
    <dbReference type="NCBI Taxonomy" id="240015"/>
    <lineage>
        <taxon>Bacteria</taxon>
        <taxon>Pseudomonadati</taxon>
        <taxon>Acidobacteriota</taxon>
        <taxon>Terriglobia</taxon>
        <taxon>Terriglobales</taxon>
        <taxon>Acidobacteriaceae</taxon>
        <taxon>Acidobacterium</taxon>
    </lineage>
</organism>
<name>RL4_ACIC5</name>
<reference key="1">
    <citation type="journal article" date="2009" name="Appl. Environ. Microbiol.">
        <title>Three genomes from the phylum Acidobacteria provide insight into the lifestyles of these microorganisms in soils.</title>
        <authorList>
            <person name="Ward N.L."/>
            <person name="Challacombe J.F."/>
            <person name="Janssen P.H."/>
            <person name="Henrissat B."/>
            <person name="Coutinho P.M."/>
            <person name="Wu M."/>
            <person name="Xie G."/>
            <person name="Haft D.H."/>
            <person name="Sait M."/>
            <person name="Badger J."/>
            <person name="Barabote R.D."/>
            <person name="Bradley B."/>
            <person name="Brettin T.S."/>
            <person name="Brinkac L.M."/>
            <person name="Bruce D."/>
            <person name="Creasy T."/>
            <person name="Daugherty S.C."/>
            <person name="Davidsen T.M."/>
            <person name="DeBoy R.T."/>
            <person name="Detter J.C."/>
            <person name="Dodson R.J."/>
            <person name="Durkin A.S."/>
            <person name="Ganapathy A."/>
            <person name="Gwinn-Giglio M."/>
            <person name="Han C.S."/>
            <person name="Khouri H."/>
            <person name="Kiss H."/>
            <person name="Kothari S.P."/>
            <person name="Madupu R."/>
            <person name="Nelson K.E."/>
            <person name="Nelson W.C."/>
            <person name="Paulsen I."/>
            <person name="Penn K."/>
            <person name="Ren Q."/>
            <person name="Rosovitz M.J."/>
            <person name="Selengut J.D."/>
            <person name="Shrivastava S."/>
            <person name="Sullivan S.A."/>
            <person name="Tapia R."/>
            <person name="Thompson L.S."/>
            <person name="Watkins K.L."/>
            <person name="Yang Q."/>
            <person name="Yu C."/>
            <person name="Zafar N."/>
            <person name="Zhou L."/>
            <person name="Kuske C.R."/>
        </authorList>
    </citation>
    <scope>NUCLEOTIDE SEQUENCE [LARGE SCALE GENOMIC DNA]</scope>
    <source>
        <strain>ATCC 51196 / DSM 11244 / BCRC 80197 / JCM 7670 / NBRC 15755 / NCIMB 13165 / 161</strain>
    </source>
</reference>
<feature type="chain" id="PRO_1000165977" description="Large ribosomal subunit protein uL4">
    <location>
        <begin position="1"/>
        <end position="222"/>
    </location>
</feature>
<keyword id="KW-1185">Reference proteome</keyword>
<keyword id="KW-0687">Ribonucleoprotein</keyword>
<keyword id="KW-0689">Ribosomal protein</keyword>
<keyword id="KW-0694">RNA-binding</keyword>
<keyword id="KW-0699">rRNA-binding</keyword>
<sequence length="222" mass="24678">MANVDVLDLGGKKVGSLELADELFAPSEVNEALLWEAVKHYRASLRQGTHATKNKKLVSGSGKKLWKQKGTGRARVGSVRSPLWRHGGTVHGPQPRSYDYAFPKKKLMGALRSALAAKLADGKLIVVESFEVSEPKTKLYRTALDKLEANRSTLLVESSQSLTENLYLGARNLANVELVLNNEVHPYDLLRYERAIFSRAAIEKLQESLQKTVSRRRKAEVA</sequence>
<protein>
    <recommendedName>
        <fullName evidence="1">Large ribosomal subunit protein uL4</fullName>
    </recommendedName>
    <alternativeName>
        <fullName evidence="2">50S ribosomal protein L4</fullName>
    </alternativeName>
</protein>